<comment type="function">
    <text evidence="1">Binds as a heterodimer with protein bS6 to the central domain of the 16S rRNA, where it helps stabilize the platform of the 30S subunit.</text>
</comment>
<comment type="subunit">
    <text evidence="1">Part of the 30S ribosomal subunit. Forms a tight heterodimer with protein bS6.</text>
</comment>
<comment type="similarity">
    <text evidence="1">Belongs to the bacterial ribosomal protein bS18 family.</text>
</comment>
<keyword id="KW-0687">Ribonucleoprotein</keyword>
<keyword id="KW-0689">Ribosomal protein</keyword>
<keyword id="KW-0694">RNA-binding</keyword>
<keyword id="KW-0699">rRNA-binding</keyword>
<protein>
    <recommendedName>
        <fullName evidence="1">Small ribosomal subunit protein bS18</fullName>
    </recommendedName>
    <alternativeName>
        <fullName evidence="2">30S ribosomal protein S18</fullName>
    </alternativeName>
</protein>
<gene>
    <name evidence="1" type="primary">rpsR</name>
    <name type="ordered locus">MLBr02683</name>
</gene>
<evidence type="ECO:0000255" key="1">
    <source>
        <dbReference type="HAMAP-Rule" id="MF_00270"/>
    </source>
</evidence>
<evidence type="ECO:0000305" key="2"/>
<name>RS18_MYCLB</name>
<accession>B8ZTL5</accession>
<dbReference type="EMBL" id="FM211192">
    <property type="protein sequence ID" value="CAR72783.1"/>
    <property type="molecule type" value="Genomic_DNA"/>
</dbReference>
<dbReference type="SMR" id="B8ZTL5"/>
<dbReference type="KEGG" id="mlb:MLBr02683"/>
<dbReference type="HOGENOM" id="CLU_148710_2_2_11"/>
<dbReference type="Proteomes" id="UP000006900">
    <property type="component" value="Chromosome"/>
</dbReference>
<dbReference type="GO" id="GO:0022627">
    <property type="term" value="C:cytosolic small ribosomal subunit"/>
    <property type="evidence" value="ECO:0007669"/>
    <property type="project" value="TreeGrafter"/>
</dbReference>
<dbReference type="GO" id="GO:0070181">
    <property type="term" value="F:small ribosomal subunit rRNA binding"/>
    <property type="evidence" value="ECO:0007669"/>
    <property type="project" value="TreeGrafter"/>
</dbReference>
<dbReference type="GO" id="GO:0003735">
    <property type="term" value="F:structural constituent of ribosome"/>
    <property type="evidence" value="ECO:0007669"/>
    <property type="project" value="InterPro"/>
</dbReference>
<dbReference type="GO" id="GO:0006412">
    <property type="term" value="P:translation"/>
    <property type="evidence" value="ECO:0007669"/>
    <property type="project" value="UniProtKB-UniRule"/>
</dbReference>
<dbReference type="FunFam" id="4.10.640.10:FF:000004">
    <property type="entry name" value="30S ribosomal protein S18"/>
    <property type="match status" value="1"/>
</dbReference>
<dbReference type="Gene3D" id="4.10.640.10">
    <property type="entry name" value="Ribosomal protein S18"/>
    <property type="match status" value="1"/>
</dbReference>
<dbReference type="HAMAP" id="MF_00270">
    <property type="entry name" value="Ribosomal_bS18"/>
    <property type="match status" value="1"/>
</dbReference>
<dbReference type="InterPro" id="IPR001648">
    <property type="entry name" value="Ribosomal_bS18"/>
</dbReference>
<dbReference type="InterPro" id="IPR018275">
    <property type="entry name" value="Ribosomal_bS18_CS"/>
</dbReference>
<dbReference type="InterPro" id="IPR036870">
    <property type="entry name" value="Ribosomal_bS18_sf"/>
</dbReference>
<dbReference type="NCBIfam" id="TIGR00165">
    <property type="entry name" value="S18"/>
    <property type="match status" value="1"/>
</dbReference>
<dbReference type="PANTHER" id="PTHR13479">
    <property type="entry name" value="30S RIBOSOMAL PROTEIN S18"/>
    <property type="match status" value="1"/>
</dbReference>
<dbReference type="PANTHER" id="PTHR13479:SF62">
    <property type="entry name" value="SMALL RIBOSOMAL SUBUNIT PROTEIN BS18A"/>
    <property type="match status" value="1"/>
</dbReference>
<dbReference type="Pfam" id="PF01084">
    <property type="entry name" value="Ribosomal_S18"/>
    <property type="match status" value="1"/>
</dbReference>
<dbReference type="PRINTS" id="PR00974">
    <property type="entry name" value="RIBOSOMALS18"/>
</dbReference>
<dbReference type="SUPFAM" id="SSF46911">
    <property type="entry name" value="Ribosomal protein S18"/>
    <property type="match status" value="1"/>
</dbReference>
<dbReference type="PROSITE" id="PS00057">
    <property type="entry name" value="RIBOSOMAL_S18"/>
    <property type="match status" value="1"/>
</dbReference>
<sequence length="84" mass="9557">MAKSTKRRPAPEKPAKARKCVFCAKKNQQIDYKDTTLLRTYISERGKIRARRVTGNCVQHQRDIAIAVKNAREVALLPFTSSAR</sequence>
<proteinExistence type="inferred from homology"/>
<feature type="chain" id="PRO_1000196523" description="Small ribosomal subunit protein bS18">
    <location>
        <begin position="1"/>
        <end position="84"/>
    </location>
</feature>
<reference key="1">
    <citation type="journal article" date="2009" name="Nat. Genet.">
        <title>Comparative genomic and phylogeographic analysis of Mycobacterium leprae.</title>
        <authorList>
            <person name="Monot M."/>
            <person name="Honore N."/>
            <person name="Garnier T."/>
            <person name="Zidane N."/>
            <person name="Sherafi D."/>
            <person name="Paniz-Mondolfi A."/>
            <person name="Matsuoka M."/>
            <person name="Taylor G.M."/>
            <person name="Donoghue H.D."/>
            <person name="Bouwman A."/>
            <person name="Mays S."/>
            <person name="Watson C."/>
            <person name="Lockwood D."/>
            <person name="Khamispour A."/>
            <person name="Dowlati Y."/>
            <person name="Jianping S."/>
            <person name="Rea T.H."/>
            <person name="Vera-Cabrera L."/>
            <person name="Stefani M.M."/>
            <person name="Banu S."/>
            <person name="Macdonald M."/>
            <person name="Sapkota B.R."/>
            <person name="Spencer J.S."/>
            <person name="Thomas J."/>
            <person name="Harshman K."/>
            <person name="Singh P."/>
            <person name="Busso P."/>
            <person name="Gattiker A."/>
            <person name="Rougemont J."/>
            <person name="Brennan P.J."/>
            <person name="Cole S.T."/>
        </authorList>
    </citation>
    <scope>NUCLEOTIDE SEQUENCE [LARGE SCALE GENOMIC DNA]</scope>
    <source>
        <strain>Br4923</strain>
    </source>
</reference>
<organism>
    <name type="scientific">Mycobacterium leprae (strain Br4923)</name>
    <dbReference type="NCBI Taxonomy" id="561304"/>
    <lineage>
        <taxon>Bacteria</taxon>
        <taxon>Bacillati</taxon>
        <taxon>Actinomycetota</taxon>
        <taxon>Actinomycetes</taxon>
        <taxon>Mycobacteriales</taxon>
        <taxon>Mycobacteriaceae</taxon>
        <taxon>Mycobacterium</taxon>
    </lineage>
</organism>